<keyword id="KW-0687">Ribonucleoprotein</keyword>
<keyword id="KW-0689">Ribosomal protein</keyword>
<keyword id="KW-0694">RNA-binding</keyword>
<keyword id="KW-0699">rRNA-binding</keyword>
<feature type="chain" id="PRO_1000054871" description="Small ribosomal subunit protein uS15">
    <location>
        <begin position="1"/>
        <end position="89"/>
    </location>
</feature>
<organism>
    <name type="scientific">Shewanella sp. (strain ANA-3)</name>
    <dbReference type="NCBI Taxonomy" id="94122"/>
    <lineage>
        <taxon>Bacteria</taxon>
        <taxon>Pseudomonadati</taxon>
        <taxon>Pseudomonadota</taxon>
        <taxon>Gammaproteobacteria</taxon>
        <taxon>Alteromonadales</taxon>
        <taxon>Shewanellaceae</taxon>
        <taxon>Shewanella</taxon>
    </lineage>
</organism>
<name>RS15_SHESA</name>
<sequence length="89" mass="10188">MSLSTEAKAKILAEFGRGANDTGSTEVQVALLTAQINHLQDHFKEHIHDHHSRRGLLRMVSARRKLLAYLKRTEAARYNELIQKLGLRR</sequence>
<accession>A0KTZ9</accession>
<dbReference type="EMBL" id="CP000469">
    <property type="protein sequence ID" value="ABK47268.1"/>
    <property type="molecule type" value="Genomic_DNA"/>
</dbReference>
<dbReference type="RefSeq" id="WP_011621820.1">
    <property type="nucleotide sequence ID" value="NC_008577.1"/>
</dbReference>
<dbReference type="SMR" id="A0KTZ9"/>
<dbReference type="STRING" id="94122.Shewana3_1033"/>
<dbReference type="GeneID" id="94727024"/>
<dbReference type="KEGG" id="shn:Shewana3_1033"/>
<dbReference type="eggNOG" id="COG0184">
    <property type="taxonomic scope" value="Bacteria"/>
</dbReference>
<dbReference type="HOGENOM" id="CLU_148518_0_0_6"/>
<dbReference type="OrthoDB" id="9799262at2"/>
<dbReference type="Proteomes" id="UP000002589">
    <property type="component" value="Chromosome"/>
</dbReference>
<dbReference type="GO" id="GO:0022627">
    <property type="term" value="C:cytosolic small ribosomal subunit"/>
    <property type="evidence" value="ECO:0007669"/>
    <property type="project" value="TreeGrafter"/>
</dbReference>
<dbReference type="GO" id="GO:0019843">
    <property type="term" value="F:rRNA binding"/>
    <property type="evidence" value="ECO:0007669"/>
    <property type="project" value="UniProtKB-UniRule"/>
</dbReference>
<dbReference type="GO" id="GO:0003735">
    <property type="term" value="F:structural constituent of ribosome"/>
    <property type="evidence" value="ECO:0007669"/>
    <property type="project" value="InterPro"/>
</dbReference>
<dbReference type="GO" id="GO:0006412">
    <property type="term" value="P:translation"/>
    <property type="evidence" value="ECO:0007669"/>
    <property type="project" value="UniProtKB-UniRule"/>
</dbReference>
<dbReference type="CDD" id="cd00353">
    <property type="entry name" value="Ribosomal_S15p_S13e"/>
    <property type="match status" value="1"/>
</dbReference>
<dbReference type="FunFam" id="1.10.287.10:FF:000002">
    <property type="entry name" value="30S ribosomal protein S15"/>
    <property type="match status" value="1"/>
</dbReference>
<dbReference type="Gene3D" id="6.10.250.3130">
    <property type="match status" value="1"/>
</dbReference>
<dbReference type="Gene3D" id="1.10.287.10">
    <property type="entry name" value="S15/NS1, RNA-binding"/>
    <property type="match status" value="1"/>
</dbReference>
<dbReference type="HAMAP" id="MF_01343_B">
    <property type="entry name" value="Ribosomal_uS15_B"/>
    <property type="match status" value="1"/>
</dbReference>
<dbReference type="InterPro" id="IPR000589">
    <property type="entry name" value="Ribosomal_uS15"/>
</dbReference>
<dbReference type="InterPro" id="IPR005290">
    <property type="entry name" value="Ribosomal_uS15_bac-type"/>
</dbReference>
<dbReference type="InterPro" id="IPR009068">
    <property type="entry name" value="uS15_NS1_RNA-bd_sf"/>
</dbReference>
<dbReference type="NCBIfam" id="TIGR00952">
    <property type="entry name" value="S15_bact"/>
    <property type="match status" value="1"/>
</dbReference>
<dbReference type="PANTHER" id="PTHR23321">
    <property type="entry name" value="RIBOSOMAL PROTEIN S15, BACTERIAL AND ORGANELLAR"/>
    <property type="match status" value="1"/>
</dbReference>
<dbReference type="PANTHER" id="PTHR23321:SF26">
    <property type="entry name" value="SMALL RIBOSOMAL SUBUNIT PROTEIN US15M"/>
    <property type="match status" value="1"/>
</dbReference>
<dbReference type="Pfam" id="PF00312">
    <property type="entry name" value="Ribosomal_S15"/>
    <property type="match status" value="1"/>
</dbReference>
<dbReference type="SMART" id="SM01387">
    <property type="entry name" value="Ribosomal_S15"/>
    <property type="match status" value="1"/>
</dbReference>
<dbReference type="SUPFAM" id="SSF47060">
    <property type="entry name" value="S15/NS1 RNA-binding domain"/>
    <property type="match status" value="1"/>
</dbReference>
<dbReference type="PROSITE" id="PS00362">
    <property type="entry name" value="RIBOSOMAL_S15"/>
    <property type="match status" value="1"/>
</dbReference>
<gene>
    <name evidence="1" type="primary">rpsO</name>
    <name type="ordered locus">Shewana3_1033</name>
</gene>
<reference key="1">
    <citation type="submission" date="2006-09" db="EMBL/GenBank/DDBJ databases">
        <title>Complete sequence of chromosome 1 of Shewanella sp. ANA-3.</title>
        <authorList>
            <person name="Copeland A."/>
            <person name="Lucas S."/>
            <person name="Lapidus A."/>
            <person name="Barry K."/>
            <person name="Detter J.C."/>
            <person name="Glavina del Rio T."/>
            <person name="Hammon N."/>
            <person name="Israni S."/>
            <person name="Dalin E."/>
            <person name="Tice H."/>
            <person name="Pitluck S."/>
            <person name="Chertkov O."/>
            <person name="Brettin T."/>
            <person name="Bruce D."/>
            <person name="Han C."/>
            <person name="Tapia R."/>
            <person name="Gilna P."/>
            <person name="Schmutz J."/>
            <person name="Larimer F."/>
            <person name="Land M."/>
            <person name="Hauser L."/>
            <person name="Kyrpides N."/>
            <person name="Kim E."/>
            <person name="Newman D."/>
            <person name="Salticov C."/>
            <person name="Konstantinidis K."/>
            <person name="Klappenback J."/>
            <person name="Tiedje J."/>
            <person name="Richardson P."/>
        </authorList>
    </citation>
    <scope>NUCLEOTIDE SEQUENCE [LARGE SCALE GENOMIC DNA]</scope>
    <source>
        <strain>ANA-3</strain>
    </source>
</reference>
<comment type="function">
    <text evidence="1">One of the primary rRNA binding proteins, it binds directly to 16S rRNA where it helps nucleate assembly of the platform of the 30S subunit by binding and bridging several RNA helices of the 16S rRNA.</text>
</comment>
<comment type="function">
    <text evidence="1">Forms an intersubunit bridge (bridge B4) with the 23S rRNA of the 50S subunit in the ribosome.</text>
</comment>
<comment type="subunit">
    <text evidence="1">Part of the 30S ribosomal subunit. Forms a bridge to the 50S subunit in the 70S ribosome, contacting the 23S rRNA.</text>
</comment>
<comment type="similarity">
    <text evidence="1">Belongs to the universal ribosomal protein uS15 family.</text>
</comment>
<proteinExistence type="inferred from homology"/>
<evidence type="ECO:0000255" key="1">
    <source>
        <dbReference type="HAMAP-Rule" id="MF_01343"/>
    </source>
</evidence>
<evidence type="ECO:0000305" key="2"/>
<protein>
    <recommendedName>
        <fullName evidence="1">Small ribosomal subunit protein uS15</fullName>
    </recommendedName>
    <alternativeName>
        <fullName evidence="2">30S ribosomal protein S15</fullName>
    </alternativeName>
</protein>